<sequence>MGYRVEADRDLCQGHAMCELEAPEYFRVPKRGQVEILDPEPPEEARGVIKHAVWACPTQALSIRETGE</sequence>
<keyword id="KW-0002">3D-structure</keyword>
<keyword id="KW-0003">3Fe-4S</keyword>
<keyword id="KW-0249">Electron transport</keyword>
<keyword id="KW-0408">Iron</keyword>
<keyword id="KW-0411">Iron-sulfur</keyword>
<keyword id="KW-0479">Metal-binding</keyword>
<keyword id="KW-1185">Reference proteome</keyword>
<keyword id="KW-0813">Transport</keyword>
<accession>P71820</accession>
<accession>F2GMY9</accession>
<accession>I6X9R5</accession>
<name>FERX_MYCTU</name>
<proteinExistence type="evidence at protein level"/>
<evidence type="ECO:0000269" key="1">
    <source>
    </source>
</evidence>
<evidence type="ECO:0000269" key="2">
    <source>
    </source>
</evidence>
<evidence type="ECO:0000303" key="3">
    <source>
    </source>
</evidence>
<evidence type="ECO:0000303" key="4">
    <source>
    </source>
</evidence>
<evidence type="ECO:0000312" key="5">
    <source>
        <dbReference type="EMBL" id="CCP43510.1"/>
    </source>
</evidence>
<evidence type="ECO:0007744" key="6">
    <source>
        <dbReference type="PDB" id="8AMP"/>
    </source>
</evidence>
<evidence type="ECO:0007829" key="7">
    <source>
        <dbReference type="PDB" id="8AMP"/>
    </source>
</evidence>
<feature type="chain" id="PRO_0000456900" description="Ferredoxin Fdx">
    <location>
        <begin position="1"/>
        <end position="68"/>
    </location>
</feature>
<feature type="binding site" evidence="2 6">
    <location>
        <position position="12"/>
    </location>
    <ligand>
        <name>[3Fe-4S] cluster</name>
        <dbReference type="ChEBI" id="CHEBI:21137"/>
    </ligand>
</feature>
<feature type="binding site" evidence="2 6">
    <location>
        <position position="13"/>
    </location>
    <ligand>
        <name>[3Fe-4S] cluster</name>
        <dbReference type="ChEBI" id="CHEBI:21137"/>
    </ligand>
</feature>
<feature type="binding site" evidence="2 6">
    <location>
        <position position="16"/>
    </location>
    <ligand>
        <name>[3Fe-4S] cluster</name>
        <dbReference type="ChEBI" id="CHEBI:21137"/>
    </ligand>
</feature>
<feature type="binding site" evidence="2 6">
    <location>
        <position position="18"/>
    </location>
    <ligand>
        <name>[3Fe-4S] cluster</name>
        <dbReference type="ChEBI" id="CHEBI:21137"/>
    </ligand>
</feature>
<feature type="binding site" evidence="2 6">
    <location>
        <position position="56"/>
    </location>
    <ligand>
        <name>[3Fe-4S] cluster</name>
        <dbReference type="ChEBI" id="CHEBI:21137"/>
    </ligand>
</feature>
<feature type="strand" evidence="7">
    <location>
        <begin position="3"/>
        <end position="7"/>
    </location>
</feature>
<feature type="turn" evidence="7">
    <location>
        <begin position="9"/>
        <end position="11"/>
    </location>
</feature>
<feature type="helix" evidence="7">
    <location>
        <begin position="17"/>
        <end position="21"/>
    </location>
</feature>
<feature type="turn" evidence="7">
    <location>
        <begin position="23"/>
        <end position="25"/>
    </location>
</feature>
<feature type="strand" evidence="7">
    <location>
        <begin position="35"/>
        <end position="37"/>
    </location>
</feature>
<feature type="helix" evidence="7">
    <location>
        <begin position="43"/>
        <end position="45"/>
    </location>
</feature>
<feature type="helix" evidence="7">
    <location>
        <begin position="46"/>
        <end position="55"/>
    </location>
</feature>
<feature type="strand" evidence="7">
    <location>
        <begin position="61"/>
        <end position="65"/>
    </location>
</feature>
<comment type="function">
    <text evidence="1">Ferredoxin that is the redox partner of cytochrome CYP51, a sterol 14alpha-demethylase encoded by an adjacent gene.</text>
</comment>
<comment type="cofactor">
    <cofactor evidence="1 2">
        <name>[3Fe-4S] cluster</name>
        <dbReference type="ChEBI" id="CHEBI:21137"/>
    </cofactor>
    <text evidence="1 2">Binds 1 [3Fe-4S] cluster per subunit.</text>
</comment>
<comment type="biophysicochemical properties">
    <redoxPotential>
        <text evidence="1">E(0) of the iron-sulfur cluster is -31 mV.</text>
    </redoxPotential>
</comment>
<comment type="miscellaneous">
    <text evidence="1">There is a positive driving force (of about 95 mV) for electron transfer from NADPH through the redox chain (FprA and Fdx) to CYP51. Thus, the overall process is thermodynamically favorable.</text>
</comment>
<protein>
    <recommendedName>
        <fullName evidence="3 4">Ferredoxin Fdx</fullName>
    </recommendedName>
</protein>
<reference key="1">
    <citation type="journal article" date="1998" name="Nature">
        <title>Deciphering the biology of Mycobacterium tuberculosis from the complete genome sequence.</title>
        <authorList>
            <person name="Cole S.T."/>
            <person name="Brosch R."/>
            <person name="Parkhill J."/>
            <person name="Garnier T."/>
            <person name="Churcher C.M."/>
            <person name="Harris D.E."/>
            <person name="Gordon S.V."/>
            <person name="Eiglmeier K."/>
            <person name="Gas S."/>
            <person name="Barry C.E. III"/>
            <person name="Tekaia F."/>
            <person name="Badcock K."/>
            <person name="Basham D."/>
            <person name="Brown D."/>
            <person name="Chillingworth T."/>
            <person name="Connor R."/>
            <person name="Davies R.M."/>
            <person name="Devlin K."/>
            <person name="Feltwell T."/>
            <person name="Gentles S."/>
            <person name="Hamlin N."/>
            <person name="Holroyd S."/>
            <person name="Hornsby T."/>
            <person name="Jagels K."/>
            <person name="Krogh A."/>
            <person name="McLean J."/>
            <person name="Moule S."/>
            <person name="Murphy L.D."/>
            <person name="Oliver S."/>
            <person name="Osborne J."/>
            <person name="Quail M.A."/>
            <person name="Rajandream M.A."/>
            <person name="Rogers J."/>
            <person name="Rutter S."/>
            <person name="Seeger K."/>
            <person name="Skelton S."/>
            <person name="Squares S."/>
            <person name="Squares R."/>
            <person name="Sulston J.E."/>
            <person name="Taylor K."/>
            <person name="Whitehead S."/>
            <person name="Barrell B.G."/>
        </authorList>
    </citation>
    <scope>NUCLEOTIDE SEQUENCE [LARGE SCALE GENOMIC DNA]</scope>
    <source>
        <strain>ATCC 25618 / H37Rv</strain>
    </source>
</reference>
<reference key="2">
    <citation type="journal article" date="2006" name="Biochemistry">
        <title>Biophysical characterization of the sterol demethylase P450 from Mycobacterium tuberculosis, its cognate ferredoxin, and their interactions.</title>
        <authorList>
            <person name="McLean K.J."/>
            <person name="Warman A.J."/>
            <person name="Seward H.E."/>
            <person name="Marshall K.R."/>
            <person name="Girvan H.M."/>
            <person name="Cheesman M.R."/>
            <person name="Waterman M.R."/>
            <person name="Munro A.W."/>
        </authorList>
    </citation>
    <scope>FUNCTION</scope>
    <scope>COFACTOR</scope>
    <scope>SPECTROSCOPIC STUDIES</scope>
    <scope>BIOPHYSICOCHEMICAL PROPERTIES</scope>
    <source>
        <strain>ATCC 25618 / H37Rv</strain>
    </source>
</reference>
<reference evidence="6" key="3">
    <citation type="journal article" date="2022" name="Front. Mol. Biosci.">
        <title>Structural insights into 3Fe-4S ferredoxins diversity in M. tuberculosis highlighted by a first redox complex with P450.</title>
        <authorList>
            <person name="Gilep A."/>
            <person name="Varaksa T."/>
            <person name="Bukhdruker S."/>
            <person name="Kavaleuski A."/>
            <person name="Ryzhykau Y."/>
            <person name="Smolskaya S."/>
            <person name="Sushko T."/>
            <person name="Tsumoto K."/>
            <person name="Grabovec I."/>
            <person name="Kapranov I."/>
            <person name="Okhrimenko I."/>
            <person name="Marin E."/>
            <person name="Shevtsov M."/>
            <person name="Mishin A."/>
            <person name="Kovalev K."/>
            <person name="Kuklin A."/>
            <person name="Gordeliy V."/>
            <person name="Kaluzhskiy L."/>
            <person name="Gnedenko O."/>
            <person name="Yablokov E."/>
            <person name="Ivanov A."/>
            <person name="Borshchevskiy V."/>
            <person name="Strushkevich N."/>
        </authorList>
    </citation>
    <scope>X-RAY CRYSTALLOGRAPHY (2.0 ANGSTROMS) IN COMPLEX WITH [3FE-4S] CLUSTER</scope>
    <scope>COFACTOR</scope>
</reference>
<dbReference type="EMBL" id="AL123456">
    <property type="protein sequence ID" value="CCP43510.1"/>
    <property type="molecule type" value="Genomic_DNA"/>
</dbReference>
<dbReference type="RefSeq" id="NP_215277.1">
    <property type="nucleotide sequence ID" value="NC_000962.3"/>
</dbReference>
<dbReference type="RefSeq" id="WP_003403890.1">
    <property type="nucleotide sequence ID" value="NZ_NVQJ01000035.1"/>
</dbReference>
<dbReference type="PDB" id="8AMP">
    <property type="method" value="X-ray"/>
    <property type="resolution" value="2.00 A"/>
    <property type="chains" value="A=1-68"/>
</dbReference>
<dbReference type="PDBsum" id="8AMP"/>
<dbReference type="SMR" id="P71820"/>
<dbReference type="STRING" id="83332.Rv0763c"/>
<dbReference type="PaxDb" id="83332-Rv0763c"/>
<dbReference type="DNASU" id="888814"/>
<dbReference type="GeneID" id="888814"/>
<dbReference type="KEGG" id="mtu:Rv0763c"/>
<dbReference type="KEGG" id="mtv:RVBD_0763c"/>
<dbReference type="PATRIC" id="fig|83332.111.peg.846"/>
<dbReference type="TubercuList" id="Rv0763c"/>
<dbReference type="eggNOG" id="COG1141">
    <property type="taxonomic scope" value="Bacteria"/>
</dbReference>
<dbReference type="InParanoid" id="P71820"/>
<dbReference type="OrthoDB" id="14703at2"/>
<dbReference type="PhylomeDB" id="P71820"/>
<dbReference type="Proteomes" id="UP000001584">
    <property type="component" value="Chromosome"/>
</dbReference>
<dbReference type="GO" id="GO:0051538">
    <property type="term" value="F:3 iron, 4 sulfur cluster binding"/>
    <property type="evidence" value="ECO:0007669"/>
    <property type="project" value="UniProtKB-KW"/>
</dbReference>
<dbReference type="GO" id="GO:0046872">
    <property type="term" value="F:metal ion binding"/>
    <property type="evidence" value="ECO:0007669"/>
    <property type="project" value="UniProtKB-KW"/>
</dbReference>
<dbReference type="Gene3D" id="3.30.70.20">
    <property type="match status" value="1"/>
</dbReference>
<dbReference type="InterPro" id="IPR051269">
    <property type="entry name" value="Fe-S_cluster_ET"/>
</dbReference>
<dbReference type="PANTHER" id="PTHR36923">
    <property type="entry name" value="FERREDOXIN"/>
    <property type="match status" value="1"/>
</dbReference>
<dbReference type="PANTHER" id="PTHR36923:SF3">
    <property type="entry name" value="FERREDOXIN"/>
    <property type="match status" value="1"/>
</dbReference>
<dbReference type="Pfam" id="PF13459">
    <property type="entry name" value="Fer4_15"/>
    <property type="match status" value="1"/>
</dbReference>
<dbReference type="SUPFAM" id="SSF54862">
    <property type="entry name" value="4Fe-4S ferredoxins"/>
    <property type="match status" value="1"/>
</dbReference>
<organism>
    <name type="scientific">Mycobacterium tuberculosis (strain ATCC 25618 / H37Rv)</name>
    <dbReference type="NCBI Taxonomy" id="83332"/>
    <lineage>
        <taxon>Bacteria</taxon>
        <taxon>Bacillati</taxon>
        <taxon>Actinomycetota</taxon>
        <taxon>Actinomycetes</taxon>
        <taxon>Mycobacteriales</taxon>
        <taxon>Mycobacteriaceae</taxon>
        <taxon>Mycobacterium</taxon>
        <taxon>Mycobacterium tuberculosis complex</taxon>
    </lineage>
</organism>
<gene>
    <name evidence="4" type="primary">fdx</name>
    <name evidence="5" type="ordered locus">Rv0763c</name>
</gene>